<name>TIG_BUCAP</name>
<dbReference type="EC" id="5.2.1.8" evidence="1"/>
<dbReference type="EMBL" id="AE013218">
    <property type="protein sequence ID" value="AAM68001.1"/>
    <property type="molecule type" value="Genomic_DNA"/>
</dbReference>
<dbReference type="RefSeq" id="WP_011053968.1">
    <property type="nucleotide sequence ID" value="NC_004061.1"/>
</dbReference>
<dbReference type="SMR" id="Q8K991"/>
<dbReference type="STRING" id="198804.BUsg_458"/>
<dbReference type="GeneID" id="93003929"/>
<dbReference type="KEGG" id="bas:BUsg_458"/>
<dbReference type="eggNOG" id="COG0544">
    <property type="taxonomic scope" value="Bacteria"/>
</dbReference>
<dbReference type="HOGENOM" id="CLU_033058_2_0_6"/>
<dbReference type="Proteomes" id="UP000000416">
    <property type="component" value="Chromosome"/>
</dbReference>
<dbReference type="GO" id="GO:0005737">
    <property type="term" value="C:cytoplasm"/>
    <property type="evidence" value="ECO:0007669"/>
    <property type="project" value="UniProtKB-SubCell"/>
</dbReference>
<dbReference type="GO" id="GO:0003755">
    <property type="term" value="F:peptidyl-prolyl cis-trans isomerase activity"/>
    <property type="evidence" value="ECO:0007669"/>
    <property type="project" value="UniProtKB-UniRule"/>
</dbReference>
<dbReference type="GO" id="GO:0051301">
    <property type="term" value="P:cell division"/>
    <property type="evidence" value="ECO:0007669"/>
    <property type="project" value="UniProtKB-KW"/>
</dbReference>
<dbReference type="GO" id="GO:0006457">
    <property type="term" value="P:protein folding"/>
    <property type="evidence" value="ECO:0007669"/>
    <property type="project" value="UniProtKB-UniRule"/>
</dbReference>
<dbReference type="GO" id="GO:0015031">
    <property type="term" value="P:protein transport"/>
    <property type="evidence" value="ECO:0007669"/>
    <property type="project" value="UniProtKB-UniRule"/>
</dbReference>
<dbReference type="Gene3D" id="3.10.50.40">
    <property type="match status" value="1"/>
</dbReference>
<dbReference type="Gene3D" id="3.30.70.1050">
    <property type="entry name" value="Trigger factor ribosome-binding domain"/>
    <property type="match status" value="1"/>
</dbReference>
<dbReference type="Gene3D" id="1.10.3120.10">
    <property type="entry name" value="Trigger factor, C-terminal domain"/>
    <property type="match status" value="1"/>
</dbReference>
<dbReference type="HAMAP" id="MF_00303">
    <property type="entry name" value="Trigger_factor_Tig"/>
    <property type="match status" value="1"/>
</dbReference>
<dbReference type="InterPro" id="IPR046357">
    <property type="entry name" value="PPIase_dom_sf"/>
</dbReference>
<dbReference type="InterPro" id="IPR005215">
    <property type="entry name" value="Trig_fac"/>
</dbReference>
<dbReference type="InterPro" id="IPR008880">
    <property type="entry name" value="Trigger_fac_C"/>
</dbReference>
<dbReference type="InterPro" id="IPR037041">
    <property type="entry name" value="Trigger_fac_C_sf"/>
</dbReference>
<dbReference type="InterPro" id="IPR008881">
    <property type="entry name" value="Trigger_fac_ribosome-bd_bac"/>
</dbReference>
<dbReference type="InterPro" id="IPR036611">
    <property type="entry name" value="Trigger_fac_ribosome-bd_sf"/>
</dbReference>
<dbReference type="InterPro" id="IPR027304">
    <property type="entry name" value="Trigger_fact/SurA_dom_sf"/>
</dbReference>
<dbReference type="NCBIfam" id="TIGR00115">
    <property type="entry name" value="tig"/>
    <property type="match status" value="1"/>
</dbReference>
<dbReference type="Pfam" id="PF05698">
    <property type="entry name" value="Trigger_C"/>
    <property type="match status" value="1"/>
</dbReference>
<dbReference type="Pfam" id="PF05697">
    <property type="entry name" value="Trigger_N"/>
    <property type="match status" value="1"/>
</dbReference>
<dbReference type="PIRSF" id="PIRSF003095">
    <property type="entry name" value="Trigger_factor"/>
    <property type="match status" value="1"/>
</dbReference>
<dbReference type="SUPFAM" id="SSF54534">
    <property type="entry name" value="FKBP-like"/>
    <property type="match status" value="1"/>
</dbReference>
<dbReference type="SUPFAM" id="SSF109998">
    <property type="entry name" value="Triger factor/SurA peptide-binding domain-like"/>
    <property type="match status" value="1"/>
</dbReference>
<dbReference type="SUPFAM" id="SSF102735">
    <property type="entry name" value="Trigger factor ribosome-binding domain"/>
    <property type="match status" value="1"/>
</dbReference>
<evidence type="ECO:0000255" key="1">
    <source>
        <dbReference type="HAMAP-Rule" id="MF_00303"/>
    </source>
</evidence>
<sequence>MKFFIEKNKKNTDRVTINIPKKIVSNELIREFIEINKKTKINGFRKGKTPIKIIQEKYGNRVYYDVFNQLMQKFFYEFIKKEKIKIIGLPKYVMHENEDQKEYFKYSVNYEVYPKFEIKDVNLIKVEKIIVNIKDEDVKKNIEKTASYEKDIWNKVNRAIKTNDLVTINYCIYENNKKLDKFNVEKFKFIVSQNNFIPELNNKLINHFTNDVIFFKINFCKFHPEEELQGKDITFKIKILNVEEKQENIEIEKNIKTIKINKLSKLNYQTIKNNIIEKIKSLTQNHLQNQIIKQLIIKNPINIPPTLLREETNFLRNKFIKEYKEKQENILKKKYHTNLESKAKTRLHIKLIIEKIIRDNKISVNEEKVDLLIKKISLKYKKPLEIINIYKKNTMLRKTIKNIELEMQVMQFLIKKVKIIEKNWTLDEIMNYNWKNNEELFA</sequence>
<protein>
    <recommendedName>
        <fullName evidence="1">Trigger factor</fullName>
        <shortName evidence="1">TF</shortName>
        <ecNumber evidence="1">5.2.1.8</ecNumber>
    </recommendedName>
    <alternativeName>
        <fullName evidence="1">PPIase</fullName>
    </alternativeName>
</protein>
<gene>
    <name evidence="1" type="primary">tig</name>
    <name type="ordered locus">BUsg_458</name>
</gene>
<reference key="1">
    <citation type="journal article" date="2002" name="Science">
        <title>50 million years of genomic stasis in endosymbiotic bacteria.</title>
        <authorList>
            <person name="Tamas I."/>
            <person name="Klasson L."/>
            <person name="Canbaeck B."/>
            <person name="Naeslund A.K."/>
            <person name="Eriksson A.-S."/>
            <person name="Wernegreen J.J."/>
            <person name="Sandstroem J.P."/>
            <person name="Moran N.A."/>
            <person name="Andersson S.G.E."/>
        </authorList>
    </citation>
    <scope>NUCLEOTIDE SEQUENCE [LARGE SCALE GENOMIC DNA]</scope>
    <source>
        <strain>Sg</strain>
    </source>
</reference>
<keyword id="KW-0131">Cell cycle</keyword>
<keyword id="KW-0132">Cell division</keyword>
<keyword id="KW-0143">Chaperone</keyword>
<keyword id="KW-0963">Cytoplasm</keyword>
<keyword id="KW-0413">Isomerase</keyword>
<keyword id="KW-0697">Rotamase</keyword>
<proteinExistence type="inferred from homology"/>
<feature type="chain" id="PRO_0000179327" description="Trigger factor">
    <location>
        <begin position="1"/>
        <end position="442"/>
    </location>
</feature>
<feature type="domain" description="PPIase FKBP-type" evidence="1">
    <location>
        <begin position="163"/>
        <end position="248"/>
    </location>
</feature>
<comment type="function">
    <text evidence="1">Involved in protein export. Acts as a chaperone by maintaining the newly synthesized protein in an open conformation. Functions as a peptidyl-prolyl cis-trans isomerase.</text>
</comment>
<comment type="catalytic activity">
    <reaction evidence="1">
        <text>[protein]-peptidylproline (omega=180) = [protein]-peptidylproline (omega=0)</text>
        <dbReference type="Rhea" id="RHEA:16237"/>
        <dbReference type="Rhea" id="RHEA-COMP:10747"/>
        <dbReference type="Rhea" id="RHEA-COMP:10748"/>
        <dbReference type="ChEBI" id="CHEBI:83833"/>
        <dbReference type="ChEBI" id="CHEBI:83834"/>
        <dbReference type="EC" id="5.2.1.8"/>
    </reaction>
</comment>
<comment type="subcellular location">
    <subcellularLocation>
        <location>Cytoplasm</location>
    </subcellularLocation>
    <text evidence="1">About half TF is bound to the ribosome near the polypeptide exit tunnel while the other half is free in the cytoplasm.</text>
</comment>
<comment type="domain">
    <text evidence="1">Consists of 3 domains; the N-terminus binds the ribosome, the middle domain has PPIase activity, while the C-terminus has intrinsic chaperone activity on its own.</text>
</comment>
<comment type="similarity">
    <text evidence="1">Belongs to the FKBP-type PPIase family. Tig subfamily.</text>
</comment>
<accession>Q8K991</accession>
<organism>
    <name type="scientific">Buchnera aphidicola subsp. Schizaphis graminum (strain Sg)</name>
    <dbReference type="NCBI Taxonomy" id="198804"/>
    <lineage>
        <taxon>Bacteria</taxon>
        <taxon>Pseudomonadati</taxon>
        <taxon>Pseudomonadota</taxon>
        <taxon>Gammaproteobacteria</taxon>
        <taxon>Enterobacterales</taxon>
        <taxon>Erwiniaceae</taxon>
        <taxon>Buchnera</taxon>
    </lineage>
</organism>